<sequence length="397" mass="44362">MSASIYLVKGREKSLLRRHPWIFSKGIERVQGNPIDGDTVEIYTQDGKWLARGAWSGSSQIRARVWTFDKEETVDLDFFIRRLKYAQESRDGLIKRQGLTGYRLCAAESDGLPGLTIDRYADFLVCQILSAGAEFQRDLITQALRTLYPECSIYERSDVAVRKKEGLKERTGVIYGETPTEPVVIEENGGVKILVDIRNGHKTGFYLDQRDNRQAAAKYTEGKRVLNCFCYTGGFGVYALKGGAKEVVNVDLSQNALDIARQNAELNGLDTSNTQFVRHDVFKLLREYREKGDKFDVIVLDPPKFAESKAQLLGACRGYKDINMLAFQLLAPGGVLLTYSCSGLMEQSLFQKIVADAALDAGRDAQILELLSQASDHPIGTAYPEGFYLKGLVVRAR</sequence>
<proteinExistence type="inferred from homology"/>
<organism>
    <name type="scientific">Aeromonas hydrophila subsp. hydrophila (strain ATCC 7966 / DSM 30187 / BCRC 13018 / CCUG 14551 / JCM 1027 / KCTC 2358 / NCIMB 9240 / NCTC 8049)</name>
    <dbReference type="NCBI Taxonomy" id="380703"/>
    <lineage>
        <taxon>Bacteria</taxon>
        <taxon>Pseudomonadati</taxon>
        <taxon>Pseudomonadota</taxon>
        <taxon>Gammaproteobacteria</taxon>
        <taxon>Aeromonadales</taxon>
        <taxon>Aeromonadaceae</taxon>
        <taxon>Aeromonas</taxon>
    </lineage>
</organism>
<accession>A0KKF0</accession>
<dbReference type="EC" id="2.1.1.191" evidence="1"/>
<dbReference type="EMBL" id="CP000462">
    <property type="protein sequence ID" value="ABK36492.1"/>
    <property type="status" value="ALT_INIT"/>
    <property type="molecule type" value="Genomic_DNA"/>
</dbReference>
<dbReference type="RefSeq" id="WP_164927646.1">
    <property type="nucleotide sequence ID" value="NC_008570.1"/>
</dbReference>
<dbReference type="RefSeq" id="YP_856751.1">
    <property type="nucleotide sequence ID" value="NC_008570.1"/>
</dbReference>
<dbReference type="SMR" id="A0KKF0"/>
<dbReference type="STRING" id="380703.AHA_2227"/>
<dbReference type="EnsemblBacteria" id="ABK36492">
    <property type="protein sequence ID" value="ABK36492"/>
    <property type="gene ID" value="AHA_2227"/>
</dbReference>
<dbReference type="GeneID" id="4489577"/>
<dbReference type="KEGG" id="aha:AHA_2227"/>
<dbReference type="PATRIC" id="fig|380703.7.peg.2228"/>
<dbReference type="eggNOG" id="COG1092">
    <property type="taxonomic scope" value="Bacteria"/>
</dbReference>
<dbReference type="HOGENOM" id="CLU_014042_0_0_6"/>
<dbReference type="OrthoDB" id="9805492at2"/>
<dbReference type="Proteomes" id="UP000000756">
    <property type="component" value="Chromosome"/>
</dbReference>
<dbReference type="GO" id="GO:0005737">
    <property type="term" value="C:cytoplasm"/>
    <property type="evidence" value="ECO:0007669"/>
    <property type="project" value="UniProtKB-SubCell"/>
</dbReference>
<dbReference type="GO" id="GO:0003723">
    <property type="term" value="F:RNA binding"/>
    <property type="evidence" value="ECO:0007669"/>
    <property type="project" value="UniProtKB-KW"/>
</dbReference>
<dbReference type="GO" id="GO:0016434">
    <property type="term" value="F:rRNA (cytosine) methyltransferase activity"/>
    <property type="evidence" value="ECO:0007669"/>
    <property type="project" value="UniProtKB-UniRule"/>
</dbReference>
<dbReference type="CDD" id="cd02440">
    <property type="entry name" value="AdoMet_MTases"/>
    <property type="match status" value="1"/>
</dbReference>
<dbReference type="CDD" id="cd21153">
    <property type="entry name" value="PUA_RlmI"/>
    <property type="match status" value="1"/>
</dbReference>
<dbReference type="CDD" id="cd11572">
    <property type="entry name" value="RlmI_M_like"/>
    <property type="match status" value="1"/>
</dbReference>
<dbReference type="Gene3D" id="2.30.130.10">
    <property type="entry name" value="PUA domain"/>
    <property type="match status" value="1"/>
</dbReference>
<dbReference type="Gene3D" id="3.30.750.80">
    <property type="entry name" value="RNA methyltransferase domain (HRMD) like"/>
    <property type="match status" value="1"/>
</dbReference>
<dbReference type="Gene3D" id="3.40.50.150">
    <property type="entry name" value="Vaccinia Virus protein VP39"/>
    <property type="match status" value="1"/>
</dbReference>
<dbReference type="HAMAP" id="MF_01857">
    <property type="entry name" value="23SrRNA_methyltr_I"/>
    <property type="match status" value="1"/>
</dbReference>
<dbReference type="InterPro" id="IPR002478">
    <property type="entry name" value="PUA"/>
</dbReference>
<dbReference type="InterPro" id="IPR015947">
    <property type="entry name" value="PUA-like_sf"/>
</dbReference>
<dbReference type="InterPro" id="IPR036974">
    <property type="entry name" value="PUA_sf"/>
</dbReference>
<dbReference type="InterPro" id="IPR023542">
    <property type="entry name" value="RLMI"/>
</dbReference>
<dbReference type="InterPro" id="IPR041532">
    <property type="entry name" value="RlmI-like_PUA"/>
</dbReference>
<dbReference type="InterPro" id="IPR019614">
    <property type="entry name" value="SAM-dep_methyl-trfase"/>
</dbReference>
<dbReference type="InterPro" id="IPR029063">
    <property type="entry name" value="SAM-dependent_MTases_sf"/>
</dbReference>
<dbReference type="PANTHER" id="PTHR42873">
    <property type="entry name" value="RIBOSOMAL RNA LARGE SUBUNIT METHYLTRANSFERASE"/>
    <property type="match status" value="1"/>
</dbReference>
<dbReference type="PANTHER" id="PTHR42873:SF1">
    <property type="entry name" value="S-ADENOSYLMETHIONINE-DEPENDENT METHYLTRANSFERASE DOMAIN-CONTAINING PROTEIN"/>
    <property type="match status" value="1"/>
</dbReference>
<dbReference type="Pfam" id="PF10672">
    <property type="entry name" value="Methyltrans_SAM"/>
    <property type="match status" value="1"/>
</dbReference>
<dbReference type="Pfam" id="PF17785">
    <property type="entry name" value="PUA_3"/>
    <property type="match status" value="1"/>
</dbReference>
<dbReference type="SMART" id="SM00359">
    <property type="entry name" value="PUA"/>
    <property type="match status" value="1"/>
</dbReference>
<dbReference type="SUPFAM" id="SSF88697">
    <property type="entry name" value="PUA domain-like"/>
    <property type="match status" value="1"/>
</dbReference>
<dbReference type="SUPFAM" id="SSF53335">
    <property type="entry name" value="S-adenosyl-L-methionine-dependent methyltransferases"/>
    <property type="match status" value="1"/>
</dbReference>
<dbReference type="PROSITE" id="PS50890">
    <property type="entry name" value="PUA"/>
    <property type="match status" value="1"/>
</dbReference>
<keyword id="KW-0963">Cytoplasm</keyword>
<keyword id="KW-0489">Methyltransferase</keyword>
<keyword id="KW-1185">Reference proteome</keyword>
<keyword id="KW-0694">RNA-binding</keyword>
<keyword id="KW-0698">rRNA processing</keyword>
<keyword id="KW-0949">S-adenosyl-L-methionine</keyword>
<keyword id="KW-0808">Transferase</keyword>
<reference key="1">
    <citation type="journal article" date="2006" name="J. Bacteriol.">
        <title>Genome sequence of Aeromonas hydrophila ATCC 7966T: jack of all trades.</title>
        <authorList>
            <person name="Seshadri R."/>
            <person name="Joseph S.W."/>
            <person name="Chopra A.K."/>
            <person name="Sha J."/>
            <person name="Shaw J."/>
            <person name="Graf J."/>
            <person name="Haft D.H."/>
            <person name="Wu M."/>
            <person name="Ren Q."/>
            <person name="Rosovitz M.J."/>
            <person name="Madupu R."/>
            <person name="Tallon L."/>
            <person name="Kim M."/>
            <person name="Jin S."/>
            <person name="Vuong H."/>
            <person name="Stine O.C."/>
            <person name="Ali A."/>
            <person name="Horneman A.J."/>
            <person name="Heidelberg J.F."/>
        </authorList>
    </citation>
    <scope>NUCLEOTIDE SEQUENCE [LARGE SCALE GENOMIC DNA]</scope>
    <source>
        <strain>ATCC 7966 / DSM 30187 / BCRC 13018 / CCUG 14551 / JCM 1027 / KCTC 2358 / NCIMB 9240 / NCTC 8049</strain>
    </source>
</reference>
<feature type="chain" id="PRO_0000366214" description="Ribosomal RNA large subunit methyltransferase I">
    <location>
        <begin position="1"/>
        <end position="397"/>
    </location>
</feature>
<feature type="domain" description="PUA" evidence="1">
    <location>
        <begin position="2"/>
        <end position="79"/>
    </location>
</feature>
<protein>
    <recommendedName>
        <fullName evidence="1">Ribosomal RNA large subunit methyltransferase I</fullName>
        <ecNumber evidence="1">2.1.1.191</ecNumber>
    </recommendedName>
    <alternativeName>
        <fullName evidence="1">23S rRNA m5C1962 methyltransferase</fullName>
    </alternativeName>
    <alternativeName>
        <fullName evidence="1">rRNA (cytosine-C(5)-)-methyltransferase RlmI</fullName>
    </alternativeName>
</protein>
<name>RLMI_AERHH</name>
<evidence type="ECO:0000255" key="1">
    <source>
        <dbReference type="HAMAP-Rule" id="MF_01857"/>
    </source>
</evidence>
<evidence type="ECO:0000305" key="2"/>
<gene>
    <name evidence="1" type="primary">rlmI</name>
    <name type="ordered locus">AHA_2227</name>
</gene>
<comment type="function">
    <text evidence="1">Specifically methylates the cytosine at position 1962 (m5C1962) of 23S rRNA.</text>
</comment>
<comment type="catalytic activity">
    <reaction evidence="1">
        <text>cytidine(1962) in 23S rRNA + S-adenosyl-L-methionine = 5-methylcytidine(1962) in 23S rRNA + S-adenosyl-L-homocysteine + H(+)</text>
        <dbReference type="Rhea" id="RHEA:42912"/>
        <dbReference type="Rhea" id="RHEA-COMP:10382"/>
        <dbReference type="Rhea" id="RHEA-COMP:10386"/>
        <dbReference type="ChEBI" id="CHEBI:15378"/>
        <dbReference type="ChEBI" id="CHEBI:57856"/>
        <dbReference type="ChEBI" id="CHEBI:59789"/>
        <dbReference type="ChEBI" id="CHEBI:74483"/>
        <dbReference type="ChEBI" id="CHEBI:82748"/>
        <dbReference type="EC" id="2.1.1.191"/>
    </reaction>
</comment>
<comment type="subcellular location">
    <subcellularLocation>
        <location evidence="1">Cytoplasm</location>
    </subcellularLocation>
</comment>
<comment type="similarity">
    <text evidence="1">Belongs to the methyltransferase superfamily. RlmI family.</text>
</comment>
<comment type="sequence caution" evidence="2">
    <conflict type="erroneous initiation">
        <sequence resource="EMBL-CDS" id="ABK36492"/>
    </conflict>
</comment>